<sequence>MKLAHLSLFLLALHLSSSRSPSASDLPQEELVDQKCLLQKYTHRSCNKVFCQPWQRCIEGTCICKLPYQCPRAGTPVCAMNGRSYPTYCHQKSFECLHPEIKFSHNGTCAAEGKFNVSLIYGRTKTEGLVQVKLVDQDERMFICKNSWSMAEANVACVDLGFPLGVRDIQGSFNISGNLHINDTECLHVHCRGVETSLAECAFTKRRTELSNGLAGVVCYKQDADFPTSLSFQCVNGKHIPQEKACNGVNDCGDQSDELCCKGCRGNASLCKSGVCIPDQYKCNGEVDCITGEDESRCEEDRQQNIPKGLARSAQGEAEIETEETEMLTPGMDNERKRIKSLLPKLSCGVKRNTHTRRKRVIGGKPANVGDYPWQVAIKDGQRITCGGIYIGGCWILTAAHCVRPSRAHSYQVWTALLDWLKPNSQLGIQTVKRVIVHEKYNGATFQNDIALIEMKMHTGKKECELPNSVPACVPWSPYLFQPNDRCIISGWGRGKDNQKVYSLRWGEVDLIGNCSQFYPDRYYEKEMQCAGTRDGSIDACKGDSGGPLVCEDINNVTYVWGIVSWGENCGKPEFPGVYTRVANYFDWISYHVGRSLVSQHNV</sequence>
<accession>Q61129</accession>
<accession>B2RWX8</accession>
<accession>Q9WU07</accession>
<proteinExistence type="evidence at protein level"/>
<organism>
    <name type="scientific">Mus musculus</name>
    <name type="common">Mouse</name>
    <dbReference type="NCBI Taxonomy" id="10090"/>
    <lineage>
        <taxon>Eukaryota</taxon>
        <taxon>Metazoa</taxon>
        <taxon>Chordata</taxon>
        <taxon>Craniata</taxon>
        <taxon>Vertebrata</taxon>
        <taxon>Euteleostomi</taxon>
        <taxon>Mammalia</taxon>
        <taxon>Eutheria</taxon>
        <taxon>Euarchontoglires</taxon>
        <taxon>Glires</taxon>
        <taxon>Rodentia</taxon>
        <taxon>Myomorpha</taxon>
        <taxon>Muroidea</taxon>
        <taxon>Muridae</taxon>
        <taxon>Murinae</taxon>
        <taxon>Mus</taxon>
        <taxon>Mus</taxon>
    </lineage>
</organism>
<keyword id="KW-0106">Calcium</keyword>
<keyword id="KW-0165">Cleavage on pair of basic residues</keyword>
<keyword id="KW-0180">Complement pathway</keyword>
<keyword id="KW-1015">Disulfide bond</keyword>
<keyword id="KW-0325">Glycoprotein</keyword>
<keyword id="KW-0378">Hydrolase</keyword>
<keyword id="KW-0391">Immunity</keyword>
<keyword id="KW-0399">Innate immunity</keyword>
<keyword id="KW-0479">Metal-binding</keyword>
<keyword id="KW-0645">Protease</keyword>
<keyword id="KW-1185">Reference proteome</keyword>
<keyword id="KW-0677">Repeat</keyword>
<keyword id="KW-0964">Secreted</keyword>
<keyword id="KW-0720">Serine protease</keyword>
<keyword id="KW-0732">Signal</keyword>
<protein>
    <recommendedName>
        <fullName>Complement factor I</fullName>
        <ecNumber>3.4.21.45</ecNumber>
    </recommendedName>
    <alternativeName>
        <fullName>C3B/C4B inactivator</fullName>
    </alternativeName>
    <component>
        <recommendedName>
            <fullName>Complement factor I heavy chain</fullName>
        </recommendedName>
    </component>
    <component>
        <recommendedName>
            <fullName>Complement factor I light chain</fullName>
        </recommendedName>
    </component>
</protein>
<feature type="signal peptide" evidence="3">
    <location>
        <begin position="1"/>
        <end position="18"/>
    </location>
</feature>
<feature type="chain" id="PRO_0000027571" description="Complement factor I">
    <location>
        <begin position="19"/>
        <end position="603"/>
    </location>
</feature>
<feature type="chain" id="PRO_0000027572" description="Complement factor I heavy chain">
    <location>
        <begin position="19"/>
        <end position="356"/>
    </location>
</feature>
<feature type="chain" id="PRO_0000027573" description="Complement factor I light chain">
    <location>
        <begin position="361"/>
        <end position="603"/>
    </location>
</feature>
<feature type="domain" description="Kazal-like" evidence="7">
    <location>
        <begin position="58"/>
        <end position="111"/>
    </location>
</feature>
<feature type="domain" description="SRCR" evidence="5">
    <location>
        <begin position="117"/>
        <end position="217"/>
    </location>
</feature>
<feature type="domain" description="LDL-receptor class A 1" evidence="4">
    <location>
        <begin position="218"/>
        <end position="262"/>
    </location>
</feature>
<feature type="domain" description="LDL-receptor class A 2" evidence="4">
    <location>
        <begin position="263"/>
        <end position="299"/>
    </location>
</feature>
<feature type="domain" description="Peptidase S1" evidence="6">
    <location>
        <begin position="361"/>
        <end position="594"/>
    </location>
</feature>
<feature type="active site" description="Charge relay system" evidence="1">
    <location>
        <position position="401"/>
    </location>
</feature>
<feature type="active site" description="Charge relay system" evidence="1">
    <location>
        <position position="449"/>
    </location>
</feature>
<feature type="active site" description="Charge relay system" evidence="1">
    <location>
        <position position="545"/>
    </location>
</feature>
<feature type="binding site" evidence="2">
    <location>
        <position position="244"/>
    </location>
    <ligand>
        <name>Ca(2+)</name>
        <dbReference type="ChEBI" id="CHEBI:29108"/>
        <label>1</label>
    </ligand>
</feature>
<feature type="binding site" evidence="2">
    <location>
        <position position="247"/>
    </location>
    <ligand>
        <name>Ca(2+)</name>
        <dbReference type="ChEBI" id="CHEBI:29108"/>
        <label>1</label>
    </ligand>
</feature>
<feature type="binding site" evidence="2">
    <location>
        <position position="249"/>
    </location>
    <ligand>
        <name>Ca(2+)</name>
        <dbReference type="ChEBI" id="CHEBI:29108"/>
        <label>1</label>
    </ligand>
</feature>
<feature type="binding site" evidence="2">
    <location>
        <position position="251"/>
    </location>
    <ligand>
        <name>Ca(2+)</name>
        <dbReference type="ChEBI" id="CHEBI:29108"/>
        <label>1</label>
    </ligand>
</feature>
<feature type="binding site" evidence="2">
    <location>
        <position position="257"/>
    </location>
    <ligand>
        <name>Ca(2+)</name>
        <dbReference type="ChEBI" id="CHEBI:29108"/>
        <label>1</label>
    </ligand>
</feature>
<feature type="binding site" evidence="2">
    <location>
        <position position="258"/>
    </location>
    <ligand>
        <name>Ca(2+)</name>
        <dbReference type="ChEBI" id="CHEBI:29108"/>
        <label>1</label>
    </ligand>
</feature>
<feature type="binding site" evidence="2">
    <location>
        <position position="281"/>
    </location>
    <ligand>
        <name>Ca(2+)</name>
        <dbReference type="ChEBI" id="CHEBI:29108"/>
        <label>2</label>
    </ligand>
</feature>
<feature type="binding site" evidence="2">
    <location>
        <position position="284"/>
    </location>
    <ligand>
        <name>Ca(2+)</name>
        <dbReference type="ChEBI" id="CHEBI:29108"/>
        <label>2</label>
    </ligand>
</feature>
<feature type="binding site" evidence="2">
    <location>
        <position position="286"/>
    </location>
    <ligand>
        <name>Ca(2+)</name>
        <dbReference type="ChEBI" id="CHEBI:29108"/>
        <label>2</label>
    </ligand>
</feature>
<feature type="binding site" evidence="2">
    <location>
        <position position="288"/>
    </location>
    <ligand>
        <name>Ca(2+)</name>
        <dbReference type="ChEBI" id="CHEBI:29108"/>
        <label>2</label>
    </ligand>
</feature>
<feature type="binding site" evidence="2">
    <location>
        <position position="294"/>
    </location>
    <ligand>
        <name>Ca(2+)</name>
        <dbReference type="ChEBI" id="CHEBI:29108"/>
        <label>2</label>
    </ligand>
</feature>
<feature type="binding site" evidence="2">
    <location>
        <position position="295"/>
    </location>
    <ligand>
        <name>Ca(2+)</name>
        <dbReference type="ChEBI" id="CHEBI:29108"/>
        <label>2</label>
    </ligand>
</feature>
<feature type="glycosylation site" description="N-linked (GlcNAc...) asparagine" evidence="3">
    <location>
        <position position="106"/>
    </location>
</feature>
<feature type="glycosylation site" description="N-linked (GlcNAc...) asparagine" evidence="8">
    <location>
        <position position="116"/>
    </location>
</feature>
<feature type="glycosylation site" description="N-linked (GlcNAc...) asparagine" evidence="3">
    <location>
        <position position="174"/>
    </location>
</feature>
<feature type="glycosylation site" description="N-linked (GlcNAc...) asparagine" evidence="3">
    <location>
        <position position="182"/>
    </location>
</feature>
<feature type="glycosylation site" description="N-linked (GlcNAc...) asparagine" evidence="3">
    <location>
        <position position="267"/>
    </location>
</feature>
<feature type="glycosylation site" description="N-linked (GlcNAc...) asparagine" evidence="9">
    <location>
        <position position="514"/>
    </location>
</feature>
<feature type="glycosylation site" description="N-linked (GlcNAc...) asparagine" evidence="3">
    <location>
        <position position="556"/>
    </location>
</feature>
<feature type="disulfide bond" evidence="2">
    <location>
        <begin position="36"/>
        <end position="260"/>
    </location>
</feature>
<feature type="disulfide bond" evidence="2">
    <location>
        <begin position="46"/>
        <end position="57"/>
    </location>
</feature>
<feature type="disulfide bond" evidence="2">
    <location>
        <begin position="51"/>
        <end position="62"/>
    </location>
</feature>
<feature type="disulfide bond" evidence="2">
    <location>
        <begin position="64"/>
        <end position="96"/>
    </location>
</feature>
<feature type="disulfide bond" evidence="2">
    <location>
        <begin position="70"/>
        <end position="89"/>
    </location>
</feature>
<feature type="disulfide bond" evidence="2">
    <location>
        <begin position="78"/>
        <end position="109"/>
    </location>
</feature>
<feature type="disulfide bond" evidence="2">
    <location>
        <begin position="144"/>
        <end position="186"/>
    </location>
</feature>
<feature type="disulfide bond" evidence="2">
    <location>
        <begin position="157"/>
        <end position="219"/>
    </location>
</feature>
<feature type="disulfide bond" evidence="2">
    <location>
        <begin position="191"/>
        <end position="201"/>
    </location>
</feature>
<feature type="disulfide bond" evidence="2">
    <location>
        <begin position="234"/>
        <end position="252"/>
    </location>
</feature>
<feature type="disulfide bond" evidence="2">
    <location>
        <begin position="246"/>
        <end position="261"/>
    </location>
</feature>
<feature type="disulfide bond" evidence="2">
    <location>
        <begin position="264"/>
        <end position="276"/>
    </location>
</feature>
<feature type="disulfide bond" evidence="2">
    <location>
        <begin position="271"/>
        <end position="289"/>
    </location>
</feature>
<feature type="disulfide bond" evidence="2">
    <location>
        <begin position="283"/>
        <end position="298"/>
    </location>
</feature>
<feature type="disulfide bond" description="Interchain (between heavy and light chains)" evidence="4 5 6 7">
    <location>
        <begin position="348"/>
        <end position="473"/>
    </location>
</feature>
<feature type="disulfide bond" evidence="2">
    <location>
        <begin position="386"/>
        <end position="402"/>
    </location>
</feature>
<feature type="disulfide bond" evidence="2">
    <location>
        <begin position="394"/>
        <end position="464"/>
    </location>
</feature>
<feature type="disulfide bond" description="Interchain (with C-327)" evidence="2">
    <location>
        <position position="473"/>
    </location>
</feature>
<feature type="disulfide bond" evidence="2">
    <location>
        <begin position="487"/>
        <end position="551"/>
    </location>
</feature>
<feature type="disulfide bond" evidence="2">
    <location>
        <begin position="515"/>
        <end position="530"/>
    </location>
</feature>
<feature type="disulfide bond" evidence="2">
    <location>
        <begin position="541"/>
        <end position="570"/>
    </location>
</feature>
<feature type="sequence conflict" description="In Ref. 1; AAB00438." evidence="11" ref="1">
    <original>K</original>
    <variation>N</variation>
    <location>
        <position position="114"/>
    </location>
</feature>
<feature type="sequence conflict" description="In Ref. 1; AAB00438." evidence="11" ref="1">
    <original>NGKHIPQEKACNGVNDC</original>
    <variation>MGSTFLRRKPATVSMTV</variation>
    <location>
        <begin position="236"/>
        <end position="252"/>
    </location>
</feature>
<feature type="sequence conflict" description="In Ref. 1; AAB00438." evidence="11" ref="1">
    <original>I</original>
    <variation>T</variation>
    <location>
        <position position="554"/>
    </location>
</feature>
<gene>
    <name type="primary">Cfi</name>
    <name type="synonym">If</name>
</gene>
<comment type="function">
    <text evidence="2">Trypsin-like serine protease that plays an essential role in regulating the immune response by controlling all complement pathways. Inhibits these pathways by cleaving three peptide bonds in the alpha-chain of C3b and two bonds in the alpha-chain of C4b thereby inactivating these proteins. Essential cofactors for these reactions include factor H and C4BP in the fluid phase and membrane cofactor protein/CD46 and CR1 on cell surfaces. The presence of these cofactors on healthy cells allows degradation of deposited C3b by CFI in order to prevent undesired complement activation, while in apoptotic cells or microbes, the absence of such cofactors leads to C3b-mediated complement activation and subsequent opsonization.</text>
</comment>
<comment type="catalytic activity">
    <reaction>
        <text>Inactivates complement subcomponents C3b, iC3b and C4b by proteolytic cleavage.</text>
        <dbReference type="EC" id="3.4.21.45"/>
    </reaction>
</comment>
<comment type="subunit">
    <text evidence="2">Heterodimer of a light and heavy chains; disulfide-linked. The fully processed and mature protein circulates as a zymogen, and is allosterically activated by substrate-induced remodeling of the active site. Interacts with C3b. Interacts with complement factor H.</text>
</comment>
<comment type="subcellular location">
    <subcellularLocation>
        <location evidence="2">Secreted</location>
        <location evidence="2">Extracellular space</location>
    </subcellularLocation>
</comment>
<comment type="tissue specificity">
    <text evidence="2">Expressed in the liver by hepatocytes. Also present in other cells such as monocytes, fibroblasts or keratinocytes.</text>
</comment>
<comment type="disruption phenotype">
    <text evidence="10">CFI-deficient mice are viable and fertile under specific pathogen-free conditions. In the absence of factor I/CFI, physiological cleavage of the alpha-chain of C3b is prevented, and reduced plasma C3, factor B, and factor H levels are observed.</text>
</comment>
<comment type="similarity">
    <text evidence="6">Belongs to the peptidase S1 family.</text>
</comment>
<reference key="1">
    <citation type="journal article" date="1996" name="Mol. Immunol.">
        <title>cDNA cloning, sequencing and chromosomal assignment of the gene for mouse complement factor I (C3b/C4b inactivator): identification of a species specific divergent segment in factor I.</title>
        <authorList>
            <person name="Minta J.O."/>
            <person name="Wong M.J."/>
            <person name="Kozak C.A."/>
            <person name="Kunnath-Muglia L.M."/>
            <person name="Goldberger G."/>
        </authorList>
    </citation>
    <scope>NUCLEOTIDE SEQUENCE [MRNA]</scope>
    <source>
        <strain>BALB/cJ</strain>
    </source>
</reference>
<reference key="2">
    <citation type="journal article" date="2004" name="Genome Res.">
        <title>The status, quality, and expansion of the NIH full-length cDNA project: the Mammalian Gene Collection (MGC).</title>
        <authorList>
            <consortium name="The MGC Project Team"/>
        </authorList>
    </citation>
    <scope>NUCLEOTIDE SEQUENCE [LARGE SCALE MRNA]</scope>
    <source>
        <tissue>Brain</tissue>
    </source>
</reference>
<reference key="3">
    <citation type="journal article" date="1999" name="Biochem. Mol. Biol. Int.">
        <title>Cloning and characterization of the non-catalytic heavy chain of mouse complement factor I gene: structure comparison with the human homologue.</title>
        <authorList>
            <person name="Yun Y.-S."/>
            <person name="Goldberger G."/>
            <person name="Minta J.O."/>
        </authorList>
    </citation>
    <scope>NUCLEOTIDE SEQUENCE [GENOMIC DNA] OF 114-334</scope>
    <source>
        <strain>129/Sv</strain>
        <tissue>Kidney</tissue>
    </source>
</reference>
<reference key="4">
    <citation type="journal article" date="2006" name="J. Proteome Res.">
        <title>Proteome-wide characterization of N-glycosylation events by diagonal chromatography.</title>
        <authorList>
            <person name="Ghesquiere B."/>
            <person name="Van Damme J."/>
            <person name="Martens L."/>
            <person name="Vandekerckhove J."/>
            <person name="Gevaert K."/>
        </authorList>
    </citation>
    <scope>GLYCOSYLATION [LARGE SCALE ANALYSIS] AT ASN-116</scope>
    <source>
        <strain>C57BL/6J</strain>
        <tissue>Plasma</tissue>
    </source>
</reference>
<reference key="5">
    <citation type="journal article" date="2007" name="J. Proteome Res.">
        <title>Enhanced analysis of the mouse plasma proteome using cysteine-containing tryptic glycopeptides.</title>
        <authorList>
            <person name="Bernhard O.K."/>
            <person name="Kapp E.A."/>
            <person name="Simpson R.J."/>
        </authorList>
    </citation>
    <scope>GLYCOSYLATION [LARGE SCALE ANALYSIS] AT ASN-514</scope>
    <source>
        <strain>C57BL/6J</strain>
        <tissue>Plasma</tissue>
    </source>
</reference>
<reference key="6">
    <citation type="journal article" date="2008" name="J. Clin. Invest.">
        <title>Factor I is required for the development of membranoproliferative glomerulonephritis in factor H-deficient mice.</title>
        <authorList>
            <person name="Rose K.L."/>
            <person name="Paixao-Cavalcante D."/>
            <person name="Fish J."/>
            <person name="Manderson A.P."/>
            <person name="Malik T.H."/>
            <person name="Bygrave A.E."/>
            <person name="Lin T."/>
            <person name="Sacks S.H."/>
            <person name="Walport M.J."/>
            <person name="Cook H.T."/>
            <person name="Botto M."/>
            <person name="Pickering M.C."/>
        </authorList>
    </citation>
    <scope>DISRUPTION PHENOTYPE</scope>
</reference>
<reference key="7">
    <citation type="journal article" date="2010" name="Cell">
        <title>A tissue-specific atlas of mouse protein phosphorylation and expression.</title>
        <authorList>
            <person name="Huttlin E.L."/>
            <person name="Jedrychowski M.P."/>
            <person name="Elias J.E."/>
            <person name="Goswami T."/>
            <person name="Rad R."/>
            <person name="Beausoleil S.A."/>
            <person name="Villen J."/>
            <person name="Haas W."/>
            <person name="Sowa M.E."/>
            <person name="Gygi S.P."/>
        </authorList>
    </citation>
    <scope>IDENTIFICATION BY MASS SPECTROMETRY [LARGE SCALE ANALYSIS]</scope>
    <source>
        <tissue>Heart</tissue>
        <tissue>Liver</tissue>
        <tissue>Lung</tissue>
        <tissue>Testis</tissue>
    </source>
</reference>
<evidence type="ECO:0000250" key="1">
    <source>
        <dbReference type="UniProtKB" id="P00750"/>
    </source>
</evidence>
<evidence type="ECO:0000250" key="2">
    <source>
        <dbReference type="UniProtKB" id="P05156"/>
    </source>
</evidence>
<evidence type="ECO:0000255" key="3"/>
<evidence type="ECO:0000255" key="4">
    <source>
        <dbReference type="PROSITE-ProRule" id="PRU00124"/>
    </source>
</evidence>
<evidence type="ECO:0000255" key="5">
    <source>
        <dbReference type="PROSITE-ProRule" id="PRU00196"/>
    </source>
</evidence>
<evidence type="ECO:0000255" key="6">
    <source>
        <dbReference type="PROSITE-ProRule" id="PRU00274"/>
    </source>
</evidence>
<evidence type="ECO:0000255" key="7">
    <source>
        <dbReference type="PROSITE-ProRule" id="PRU00798"/>
    </source>
</evidence>
<evidence type="ECO:0000269" key="8">
    <source>
    </source>
</evidence>
<evidence type="ECO:0000269" key="9">
    <source>
    </source>
</evidence>
<evidence type="ECO:0000269" key="10">
    <source>
    </source>
</evidence>
<evidence type="ECO:0000305" key="11"/>
<name>CFAI_MOUSE</name>
<dbReference type="EC" id="3.4.21.45"/>
<dbReference type="EMBL" id="U47810">
    <property type="protein sequence ID" value="AAB00438.1"/>
    <property type="molecule type" value="mRNA"/>
</dbReference>
<dbReference type="EMBL" id="BC150751">
    <property type="protein sequence ID" value="AAI50752.1"/>
    <property type="molecule type" value="mRNA"/>
</dbReference>
<dbReference type="EMBL" id="AH007741">
    <property type="protein sequence ID" value="AAD32965.1"/>
    <property type="molecule type" value="Genomic_DNA"/>
</dbReference>
<dbReference type="CCDS" id="CCDS17835.1"/>
<dbReference type="RefSeq" id="NP_031712.2">
    <property type="nucleotide sequence ID" value="NM_007686.4"/>
</dbReference>
<dbReference type="SMR" id="Q61129"/>
<dbReference type="BioGRID" id="198683">
    <property type="interactions" value="2"/>
</dbReference>
<dbReference type="FunCoup" id="Q61129">
    <property type="interactions" value="39"/>
</dbReference>
<dbReference type="STRING" id="10090.ENSMUSP00000077074"/>
<dbReference type="MEROPS" id="S01.199"/>
<dbReference type="GlyCosmos" id="Q61129">
    <property type="glycosylation" value="7 sites, No reported glycans"/>
</dbReference>
<dbReference type="GlyGen" id="Q61129">
    <property type="glycosylation" value="7 sites, 2 N-linked glycans (2 sites)"/>
</dbReference>
<dbReference type="iPTMnet" id="Q61129"/>
<dbReference type="PhosphoSitePlus" id="Q61129"/>
<dbReference type="SwissPalm" id="Q61129"/>
<dbReference type="CPTAC" id="non-CPTAC-3319"/>
<dbReference type="jPOST" id="Q61129"/>
<dbReference type="PaxDb" id="10090-ENSMUSP00000077074"/>
<dbReference type="PeptideAtlas" id="Q61129"/>
<dbReference type="ProteomicsDB" id="281113"/>
<dbReference type="DNASU" id="12630"/>
<dbReference type="Ensembl" id="ENSMUST00000077918.7">
    <property type="protein sequence ID" value="ENSMUSP00000077074.6"/>
    <property type="gene ID" value="ENSMUSG00000058952.13"/>
</dbReference>
<dbReference type="GeneID" id="12630"/>
<dbReference type="KEGG" id="mmu:12630"/>
<dbReference type="UCSC" id="uc008rin.1">
    <property type="organism name" value="mouse"/>
</dbReference>
<dbReference type="AGR" id="MGI:105937"/>
<dbReference type="CTD" id="3426"/>
<dbReference type="MGI" id="MGI:105937">
    <property type="gene designation" value="Cfi"/>
</dbReference>
<dbReference type="VEuPathDB" id="HostDB:ENSMUSG00000058952"/>
<dbReference type="eggNOG" id="KOG3627">
    <property type="taxonomic scope" value="Eukaryota"/>
</dbReference>
<dbReference type="GeneTree" id="ENSGT00930000151042"/>
<dbReference type="HOGENOM" id="CLU_006842_19_6_1"/>
<dbReference type="InParanoid" id="Q61129"/>
<dbReference type="OMA" id="YECQQPK"/>
<dbReference type="OrthoDB" id="19606at2759"/>
<dbReference type="PhylomeDB" id="Q61129"/>
<dbReference type="TreeFam" id="TF330647"/>
<dbReference type="BRENDA" id="3.4.21.45">
    <property type="organism ID" value="3474"/>
</dbReference>
<dbReference type="Reactome" id="R-MMU-977606">
    <property type="pathway name" value="Regulation of Complement cascade"/>
</dbReference>
<dbReference type="BioGRID-ORCS" id="12630">
    <property type="hits" value="1 hit in 78 CRISPR screens"/>
</dbReference>
<dbReference type="ChiTaRS" id="Cfi">
    <property type="organism name" value="mouse"/>
</dbReference>
<dbReference type="PRO" id="PR:Q61129"/>
<dbReference type="Proteomes" id="UP000000589">
    <property type="component" value="Chromosome 3"/>
</dbReference>
<dbReference type="RNAct" id="Q61129">
    <property type="molecule type" value="protein"/>
</dbReference>
<dbReference type="Bgee" id="ENSMUSG00000058952">
    <property type="expression patterns" value="Expressed in left lobe of liver and 116 other cell types or tissues"/>
</dbReference>
<dbReference type="ExpressionAtlas" id="Q61129">
    <property type="expression patterns" value="baseline and differential"/>
</dbReference>
<dbReference type="GO" id="GO:0005615">
    <property type="term" value="C:extracellular space"/>
    <property type="evidence" value="ECO:0007005"/>
    <property type="project" value="BHF-UCL"/>
</dbReference>
<dbReference type="GO" id="GO:0016020">
    <property type="term" value="C:membrane"/>
    <property type="evidence" value="ECO:0007669"/>
    <property type="project" value="InterPro"/>
</dbReference>
<dbReference type="GO" id="GO:0046872">
    <property type="term" value="F:metal ion binding"/>
    <property type="evidence" value="ECO:0007669"/>
    <property type="project" value="UniProtKB-KW"/>
</dbReference>
<dbReference type="GO" id="GO:0004252">
    <property type="term" value="F:serine-type endopeptidase activity"/>
    <property type="evidence" value="ECO:0007669"/>
    <property type="project" value="UniProtKB-EC"/>
</dbReference>
<dbReference type="GO" id="GO:0006956">
    <property type="term" value="P:complement activation"/>
    <property type="evidence" value="ECO:0000315"/>
    <property type="project" value="MGI"/>
</dbReference>
<dbReference type="GO" id="GO:0006958">
    <property type="term" value="P:complement activation, classical pathway"/>
    <property type="evidence" value="ECO:0007669"/>
    <property type="project" value="UniProtKB-KW"/>
</dbReference>
<dbReference type="GO" id="GO:0045087">
    <property type="term" value="P:innate immune response"/>
    <property type="evidence" value="ECO:0007669"/>
    <property type="project" value="UniProtKB-KW"/>
</dbReference>
<dbReference type="GO" id="GO:0006508">
    <property type="term" value="P:proteolysis"/>
    <property type="evidence" value="ECO:0007669"/>
    <property type="project" value="UniProtKB-KW"/>
</dbReference>
<dbReference type="CDD" id="cd00104">
    <property type="entry name" value="KAZAL_FS"/>
    <property type="match status" value="1"/>
</dbReference>
<dbReference type="CDD" id="cd00112">
    <property type="entry name" value="LDLa"/>
    <property type="match status" value="2"/>
</dbReference>
<dbReference type="CDD" id="cd00190">
    <property type="entry name" value="Tryp_SPc"/>
    <property type="match status" value="1"/>
</dbReference>
<dbReference type="FunFam" id="2.40.10.10:FF:000066">
    <property type="entry name" value="Complement factor I"/>
    <property type="match status" value="1"/>
</dbReference>
<dbReference type="FunFam" id="3.30.60.30:FF:000027">
    <property type="entry name" value="Complement factor I"/>
    <property type="match status" value="1"/>
</dbReference>
<dbReference type="FunFam" id="4.10.400.10:FF:000129">
    <property type="entry name" value="Complement factor I"/>
    <property type="match status" value="1"/>
</dbReference>
<dbReference type="FunFam" id="4.10.400.10:FF:000163">
    <property type="entry name" value="Complement factor I"/>
    <property type="match status" value="1"/>
</dbReference>
<dbReference type="Gene3D" id="3.30.60.30">
    <property type="match status" value="1"/>
</dbReference>
<dbReference type="Gene3D" id="4.10.400.10">
    <property type="entry name" value="Low-density Lipoprotein Receptor"/>
    <property type="match status" value="2"/>
</dbReference>
<dbReference type="Gene3D" id="3.10.250.10">
    <property type="entry name" value="SRCR-like domain"/>
    <property type="match status" value="1"/>
</dbReference>
<dbReference type="Gene3D" id="2.40.10.10">
    <property type="entry name" value="Trypsin-like serine proteases"/>
    <property type="match status" value="1"/>
</dbReference>
<dbReference type="InterPro" id="IPR048722">
    <property type="entry name" value="CFAI_FIMAC_N"/>
</dbReference>
<dbReference type="InterPro" id="IPR048719">
    <property type="entry name" value="CFAI_KAZAL"/>
</dbReference>
<dbReference type="InterPro" id="IPR003884">
    <property type="entry name" value="FacI_MAC"/>
</dbReference>
<dbReference type="InterPro" id="IPR002350">
    <property type="entry name" value="Kazal_dom"/>
</dbReference>
<dbReference type="InterPro" id="IPR036058">
    <property type="entry name" value="Kazal_dom_sf"/>
</dbReference>
<dbReference type="InterPro" id="IPR036055">
    <property type="entry name" value="LDL_receptor-like_sf"/>
</dbReference>
<dbReference type="InterPro" id="IPR023415">
    <property type="entry name" value="LDLR_class-A_CS"/>
</dbReference>
<dbReference type="InterPro" id="IPR002172">
    <property type="entry name" value="LDrepeatLR_classA_rpt"/>
</dbReference>
<dbReference type="InterPro" id="IPR009003">
    <property type="entry name" value="Peptidase_S1_PA"/>
</dbReference>
<dbReference type="InterPro" id="IPR043504">
    <property type="entry name" value="Peptidase_S1_PA_chymotrypsin"/>
</dbReference>
<dbReference type="InterPro" id="IPR001314">
    <property type="entry name" value="Peptidase_S1A"/>
</dbReference>
<dbReference type="InterPro" id="IPR001190">
    <property type="entry name" value="SRCR"/>
</dbReference>
<dbReference type="InterPro" id="IPR036772">
    <property type="entry name" value="SRCR-like_dom_sf"/>
</dbReference>
<dbReference type="InterPro" id="IPR001254">
    <property type="entry name" value="Trypsin_dom"/>
</dbReference>
<dbReference type="InterPro" id="IPR018114">
    <property type="entry name" value="TRYPSIN_HIS"/>
</dbReference>
<dbReference type="InterPro" id="IPR033116">
    <property type="entry name" value="TRYPSIN_SER"/>
</dbReference>
<dbReference type="PANTHER" id="PTHR24252">
    <property type="entry name" value="ACROSIN-RELATED"/>
    <property type="match status" value="1"/>
</dbReference>
<dbReference type="PANTHER" id="PTHR24252:SF7">
    <property type="entry name" value="HYALIN"/>
    <property type="match status" value="1"/>
</dbReference>
<dbReference type="Pfam" id="PF21286">
    <property type="entry name" value="CFAI_FIMAC_N"/>
    <property type="match status" value="1"/>
</dbReference>
<dbReference type="Pfam" id="PF21287">
    <property type="entry name" value="Kazal_CFAI"/>
    <property type="match status" value="1"/>
</dbReference>
<dbReference type="Pfam" id="PF00057">
    <property type="entry name" value="Ldl_recept_a"/>
    <property type="match status" value="2"/>
</dbReference>
<dbReference type="Pfam" id="PF00530">
    <property type="entry name" value="SRCR"/>
    <property type="match status" value="1"/>
</dbReference>
<dbReference type="Pfam" id="PF00089">
    <property type="entry name" value="Trypsin"/>
    <property type="match status" value="1"/>
</dbReference>
<dbReference type="PRINTS" id="PR00722">
    <property type="entry name" value="CHYMOTRYPSIN"/>
</dbReference>
<dbReference type="SMART" id="SM00057">
    <property type="entry name" value="FIMAC"/>
    <property type="match status" value="1"/>
</dbReference>
<dbReference type="SMART" id="SM00192">
    <property type="entry name" value="LDLa"/>
    <property type="match status" value="2"/>
</dbReference>
<dbReference type="SMART" id="SM00202">
    <property type="entry name" value="SR"/>
    <property type="match status" value="1"/>
</dbReference>
<dbReference type="SMART" id="SM00020">
    <property type="entry name" value="Tryp_SPc"/>
    <property type="match status" value="1"/>
</dbReference>
<dbReference type="SUPFAM" id="SSF100895">
    <property type="entry name" value="Kazal-type serine protease inhibitors"/>
    <property type="match status" value="1"/>
</dbReference>
<dbReference type="SUPFAM" id="SSF57424">
    <property type="entry name" value="LDL receptor-like module"/>
    <property type="match status" value="2"/>
</dbReference>
<dbReference type="SUPFAM" id="SSF56487">
    <property type="entry name" value="SRCR-like"/>
    <property type="match status" value="1"/>
</dbReference>
<dbReference type="SUPFAM" id="SSF50494">
    <property type="entry name" value="Trypsin-like serine proteases"/>
    <property type="match status" value="1"/>
</dbReference>
<dbReference type="PROSITE" id="PS51465">
    <property type="entry name" value="KAZAL_2"/>
    <property type="match status" value="1"/>
</dbReference>
<dbReference type="PROSITE" id="PS01209">
    <property type="entry name" value="LDLRA_1"/>
    <property type="match status" value="1"/>
</dbReference>
<dbReference type="PROSITE" id="PS50068">
    <property type="entry name" value="LDLRA_2"/>
    <property type="match status" value="2"/>
</dbReference>
<dbReference type="PROSITE" id="PS50287">
    <property type="entry name" value="SRCR_2"/>
    <property type="match status" value="1"/>
</dbReference>
<dbReference type="PROSITE" id="PS50240">
    <property type="entry name" value="TRYPSIN_DOM"/>
    <property type="match status" value="1"/>
</dbReference>
<dbReference type="PROSITE" id="PS00134">
    <property type="entry name" value="TRYPSIN_HIS"/>
    <property type="match status" value="1"/>
</dbReference>
<dbReference type="PROSITE" id="PS00135">
    <property type="entry name" value="TRYPSIN_SER"/>
    <property type="match status" value="1"/>
</dbReference>